<gene>
    <name type="ordered locus">MIMI_L235</name>
</gene>
<name>RPO5_MIMIV</name>
<accession>Q5UPX7</accession>
<proteinExistence type="evidence at protein level"/>
<protein>
    <recommendedName>
        <fullName>DNA-directed RNA polymerase subunit 5</fullName>
        <ecNumber>2.7.7.6</ecNumber>
    </recommendedName>
</protein>
<dbReference type="EC" id="2.7.7.6"/>
<dbReference type="EMBL" id="AY653733">
    <property type="protein sequence ID" value="AAV50508.1"/>
    <property type="molecule type" value="Genomic_DNA"/>
</dbReference>
<dbReference type="SMR" id="Q5UPX7"/>
<dbReference type="KEGG" id="vg:9924842"/>
<dbReference type="OrthoDB" id="15255at10239"/>
<dbReference type="Proteomes" id="UP000001134">
    <property type="component" value="Genome"/>
</dbReference>
<dbReference type="GO" id="GO:0000428">
    <property type="term" value="C:DNA-directed RNA polymerase complex"/>
    <property type="evidence" value="ECO:0007669"/>
    <property type="project" value="UniProtKB-KW"/>
</dbReference>
<dbReference type="GO" id="GO:0044423">
    <property type="term" value="C:virion component"/>
    <property type="evidence" value="ECO:0007669"/>
    <property type="project" value="UniProtKB-KW"/>
</dbReference>
<dbReference type="GO" id="GO:0003677">
    <property type="term" value="F:DNA binding"/>
    <property type="evidence" value="ECO:0007669"/>
    <property type="project" value="InterPro"/>
</dbReference>
<dbReference type="GO" id="GO:0003899">
    <property type="term" value="F:DNA-directed RNA polymerase activity"/>
    <property type="evidence" value="ECO:0007669"/>
    <property type="project" value="UniProtKB-EC"/>
</dbReference>
<dbReference type="GO" id="GO:0006366">
    <property type="term" value="P:transcription by RNA polymerase II"/>
    <property type="evidence" value="ECO:0007669"/>
    <property type="project" value="TreeGrafter"/>
</dbReference>
<dbReference type="GO" id="GO:0006362">
    <property type="term" value="P:transcription elongation by RNA polymerase I"/>
    <property type="evidence" value="ECO:0007669"/>
    <property type="project" value="TreeGrafter"/>
</dbReference>
<dbReference type="GO" id="GO:0042797">
    <property type="term" value="P:tRNA transcription by RNA polymerase III"/>
    <property type="evidence" value="ECO:0007669"/>
    <property type="project" value="TreeGrafter"/>
</dbReference>
<dbReference type="Gene3D" id="3.90.940.20">
    <property type="entry name" value="RPB5-like RNA polymerase subunit"/>
    <property type="match status" value="1"/>
</dbReference>
<dbReference type="InterPro" id="IPR014381">
    <property type="entry name" value="Arch_Rpo5/euc_Rpb5"/>
</dbReference>
<dbReference type="InterPro" id="IPR000783">
    <property type="entry name" value="RNA_pol_subH/Rpb5_C"/>
</dbReference>
<dbReference type="InterPro" id="IPR035913">
    <property type="entry name" value="RPB5-like_sf"/>
</dbReference>
<dbReference type="PANTHER" id="PTHR10535">
    <property type="entry name" value="DNA-DIRECTED RNA POLYMERASES I, II, AND III SUBUNIT RPABC1"/>
    <property type="match status" value="1"/>
</dbReference>
<dbReference type="PANTHER" id="PTHR10535:SF0">
    <property type="entry name" value="DNA-DIRECTED RNA POLYMERASES I, II, AND III SUBUNIT RPABC1"/>
    <property type="match status" value="1"/>
</dbReference>
<dbReference type="Pfam" id="PF01191">
    <property type="entry name" value="RNA_pol_Rpb5_C"/>
    <property type="match status" value="1"/>
</dbReference>
<dbReference type="PIRSF" id="PIRSF000747">
    <property type="entry name" value="RPB5"/>
    <property type="match status" value="1"/>
</dbReference>
<dbReference type="SUPFAM" id="SSF55287">
    <property type="entry name" value="RPB5-like RNA polymerase subunit"/>
    <property type="match status" value="1"/>
</dbReference>
<organismHost>
    <name type="scientific">Acanthamoeba polyphaga</name>
    <name type="common">Amoeba</name>
    <dbReference type="NCBI Taxonomy" id="5757"/>
</organismHost>
<reference key="1">
    <citation type="journal article" date="2004" name="Science">
        <title>The 1.2-megabase genome sequence of Mimivirus.</title>
        <authorList>
            <person name="Raoult D."/>
            <person name="Audic S."/>
            <person name="Robert C."/>
            <person name="Abergel C."/>
            <person name="Renesto P."/>
            <person name="Ogata H."/>
            <person name="La Scola B."/>
            <person name="Susan M."/>
            <person name="Claverie J.-M."/>
        </authorList>
    </citation>
    <scope>NUCLEOTIDE SEQUENCE [LARGE SCALE GENOMIC DNA]</scope>
    <source>
        <strain>Rowbotham-Bradford</strain>
    </source>
</reference>
<reference key="2">
    <citation type="journal article" date="2006" name="J. Virol.">
        <title>Mimivirus giant particles incorporate a large fraction of anonymous and unique gene products.</title>
        <authorList>
            <person name="Renesto P."/>
            <person name="Abergel C."/>
            <person name="Decloquement P."/>
            <person name="Moinier D."/>
            <person name="Azza S."/>
            <person name="Ogata H."/>
            <person name="Fourquet P."/>
            <person name="Gorvel J.-P."/>
            <person name="Claverie J.-M."/>
            <person name="Raoult D."/>
        </authorList>
    </citation>
    <scope>IDENTIFICATION BY MASS SPECTROMETRY [LARGE SCALE ANALYSIS]</scope>
    <scope>SUBCELLULAR LOCATION</scope>
</reference>
<evidence type="ECO:0000250" key="1"/>
<evidence type="ECO:0000269" key="2">
    <source>
    </source>
</evidence>
<evidence type="ECO:0000305" key="3"/>
<organism>
    <name type="scientific">Acanthamoeba polyphaga mimivirus</name>
    <name type="common">APMV</name>
    <dbReference type="NCBI Taxonomy" id="212035"/>
    <lineage>
        <taxon>Viruses</taxon>
        <taxon>Varidnaviria</taxon>
        <taxon>Bamfordvirae</taxon>
        <taxon>Nucleocytoviricota</taxon>
        <taxon>Megaviricetes</taxon>
        <taxon>Imitervirales</taxon>
        <taxon>Mimiviridae</taxon>
        <taxon>Megamimivirinae</taxon>
        <taxon>Mimivirus</taxon>
        <taxon>Mimivirus bradfordmassiliense</taxon>
    </lineage>
</organism>
<feature type="chain" id="PRO_0000146087" description="DNA-directed RNA polymerase subunit 5">
    <location>
        <begin position="1"/>
        <end position="205"/>
    </location>
</feature>
<keyword id="KW-0240">DNA-directed RNA polymerase</keyword>
<keyword id="KW-0548">Nucleotidyltransferase</keyword>
<keyword id="KW-1185">Reference proteome</keyword>
<keyword id="KW-0804">Transcription</keyword>
<keyword id="KW-0808">Transferase</keyword>
<keyword id="KW-0946">Virion</keyword>
<comment type="function">
    <text evidence="1">DNA-dependent RNA polymerase catalyzes the transcription of DNA into RNA using the four ribonucleoside triphosphates as substrates.</text>
</comment>
<comment type="catalytic activity">
    <reaction>
        <text>RNA(n) + a ribonucleoside 5'-triphosphate = RNA(n+1) + diphosphate</text>
        <dbReference type="Rhea" id="RHEA:21248"/>
        <dbReference type="Rhea" id="RHEA-COMP:14527"/>
        <dbReference type="Rhea" id="RHEA-COMP:17342"/>
        <dbReference type="ChEBI" id="CHEBI:33019"/>
        <dbReference type="ChEBI" id="CHEBI:61557"/>
        <dbReference type="ChEBI" id="CHEBI:140395"/>
        <dbReference type="EC" id="2.7.7.6"/>
    </reaction>
</comment>
<comment type="subcellular location">
    <subcellularLocation>
        <location evidence="2">Virion</location>
    </subcellularLocation>
</comment>
<comment type="similarity">
    <text evidence="3">Belongs to the archaeal Rpo5/eukaryotic RPB5 RNA polymerase subunit family.</text>
</comment>
<sequence>MEPNKSILQIMKSNSDKVKIILGNIITMLGNRIYIDNNGDSKPLLDPTNAFKNMEERGDNVFIIKADNGDLYAVKVIFQKITAISKQSVISEFLDEYETYKKIIVTKDYTGKIDTFILRNSGQIFKEHEFLADLLSNEFQPRFQLLSPSEMESVKTEYNANPYTLKKIVRSDPIVRYFALKKNDIIRIIRPSATSGQGIDYRVVV</sequence>